<protein>
    <recommendedName>
        <fullName evidence="1">Transcription elongation factor GreA</fullName>
    </recommendedName>
    <alternativeName>
        <fullName evidence="1">Transcript cleavage factor GreA</fullName>
    </alternativeName>
</protein>
<sequence length="159" mass="17879">MSDRVYLTRDGYNRLKDELHELLHVTRAEVLEKIAEARSHGDLSENAEYDAAREQQSQTEARIADLESKLSSATILDPKHIKTDKVYILTSVELLNLDDKKETLEYTLVSSEESDSDLGKISVRSPVGRALIGKAVGDKVTIIVPKGELHYEVKKIFVK</sequence>
<gene>
    <name evidence="1" type="primary">greA</name>
    <name type="ordered locus">Cvib_1277</name>
</gene>
<name>GREA_CHLPM</name>
<dbReference type="EMBL" id="CP000607">
    <property type="protein sequence ID" value="ABP37289.1"/>
    <property type="molecule type" value="Genomic_DNA"/>
</dbReference>
<dbReference type="SMR" id="A4SFN0"/>
<dbReference type="STRING" id="290318.Cvib_1277"/>
<dbReference type="KEGG" id="pvi:Cvib_1277"/>
<dbReference type="eggNOG" id="COG0782">
    <property type="taxonomic scope" value="Bacteria"/>
</dbReference>
<dbReference type="HOGENOM" id="CLU_101379_2_0_10"/>
<dbReference type="OrthoDB" id="9808774at2"/>
<dbReference type="GO" id="GO:0003677">
    <property type="term" value="F:DNA binding"/>
    <property type="evidence" value="ECO:0007669"/>
    <property type="project" value="UniProtKB-UniRule"/>
</dbReference>
<dbReference type="GO" id="GO:0070063">
    <property type="term" value="F:RNA polymerase binding"/>
    <property type="evidence" value="ECO:0007669"/>
    <property type="project" value="InterPro"/>
</dbReference>
<dbReference type="GO" id="GO:0006354">
    <property type="term" value="P:DNA-templated transcription elongation"/>
    <property type="evidence" value="ECO:0007669"/>
    <property type="project" value="TreeGrafter"/>
</dbReference>
<dbReference type="GO" id="GO:0032784">
    <property type="term" value="P:regulation of DNA-templated transcription elongation"/>
    <property type="evidence" value="ECO:0007669"/>
    <property type="project" value="UniProtKB-UniRule"/>
</dbReference>
<dbReference type="FunFam" id="1.10.287.180:FF:000001">
    <property type="entry name" value="Transcription elongation factor GreA"/>
    <property type="match status" value="1"/>
</dbReference>
<dbReference type="FunFam" id="3.10.50.30:FF:000001">
    <property type="entry name" value="Transcription elongation factor GreA"/>
    <property type="match status" value="1"/>
</dbReference>
<dbReference type="Gene3D" id="3.10.50.30">
    <property type="entry name" value="Transcription elongation factor, GreA/GreB, C-terminal domain"/>
    <property type="match status" value="1"/>
</dbReference>
<dbReference type="Gene3D" id="1.10.287.180">
    <property type="entry name" value="Transcription elongation factor, GreA/GreB, N-terminal domain"/>
    <property type="match status" value="1"/>
</dbReference>
<dbReference type="HAMAP" id="MF_00105">
    <property type="entry name" value="GreA_GreB"/>
    <property type="match status" value="1"/>
</dbReference>
<dbReference type="InterPro" id="IPR036953">
    <property type="entry name" value="GreA/GreB_C_sf"/>
</dbReference>
<dbReference type="InterPro" id="IPR018151">
    <property type="entry name" value="TF_GreA/GreB_CS"/>
</dbReference>
<dbReference type="InterPro" id="IPR006359">
    <property type="entry name" value="Tscrpt_elong_fac_GreA"/>
</dbReference>
<dbReference type="InterPro" id="IPR028624">
    <property type="entry name" value="Tscrpt_elong_fac_GreA/B"/>
</dbReference>
<dbReference type="InterPro" id="IPR001437">
    <property type="entry name" value="Tscrpt_elong_fac_GreA/B_C"/>
</dbReference>
<dbReference type="InterPro" id="IPR023459">
    <property type="entry name" value="Tscrpt_elong_fac_GreA/B_fam"/>
</dbReference>
<dbReference type="InterPro" id="IPR022691">
    <property type="entry name" value="Tscrpt_elong_fac_GreA/B_N"/>
</dbReference>
<dbReference type="InterPro" id="IPR036805">
    <property type="entry name" value="Tscrpt_elong_fac_GreA/B_N_sf"/>
</dbReference>
<dbReference type="NCBIfam" id="TIGR01462">
    <property type="entry name" value="greA"/>
    <property type="match status" value="1"/>
</dbReference>
<dbReference type="NCBIfam" id="NF001261">
    <property type="entry name" value="PRK00226.1-2"/>
    <property type="match status" value="1"/>
</dbReference>
<dbReference type="NCBIfam" id="NF001263">
    <property type="entry name" value="PRK00226.1-4"/>
    <property type="match status" value="1"/>
</dbReference>
<dbReference type="PANTHER" id="PTHR30437">
    <property type="entry name" value="TRANSCRIPTION ELONGATION FACTOR GREA"/>
    <property type="match status" value="1"/>
</dbReference>
<dbReference type="PANTHER" id="PTHR30437:SF4">
    <property type="entry name" value="TRANSCRIPTION ELONGATION FACTOR GREA"/>
    <property type="match status" value="1"/>
</dbReference>
<dbReference type="Pfam" id="PF01272">
    <property type="entry name" value="GreA_GreB"/>
    <property type="match status" value="1"/>
</dbReference>
<dbReference type="Pfam" id="PF03449">
    <property type="entry name" value="GreA_GreB_N"/>
    <property type="match status" value="1"/>
</dbReference>
<dbReference type="PIRSF" id="PIRSF006092">
    <property type="entry name" value="GreA_GreB"/>
    <property type="match status" value="1"/>
</dbReference>
<dbReference type="SUPFAM" id="SSF54534">
    <property type="entry name" value="FKBP-like"/>
    <property type="match status" value="1"/>
</dbReference>
<dbReference type="SUPFAM" id="SSF46557">
    <property type="entry name" value="GreA transcript cleavage protein, N-terminal domain"/>
    <property type="match status" value="1"/>
</dbReference>
<dbReference type="PROSITE" id="PS00829">
    <property type="entry name" value="GREAB_1"/>
    <property type="match status" value="1"/>
</dbReference>
<dbReference type="PROSITE" id="PS00830">
    <property type="entry name" value="GREAB_2"/>
    <property type="match status" value="1"/>
</dbReference>
<accession>A4SFN0</accession>
<reference key="1">
    <citation type="submission" date="2007-03" db="EMBL/GenBank/DDBJ databases">
        <title>Complete sequence of Prosthecochloris vibrioformis DSM 265.</title>
        <authorList>
            <consortium name="US DOE Joint Genome Institute"/>
            <person name="Copeland A."/>
            <person name="Lucas S."/>
            <person name="Lapidus A."/>
            <person name="Barry K."/>
            <person name="Detter J.C."/>
            <person name="Glavina del Rio T."/>
            <person name="Hammon N."/>
            <person name="Israni S."/>
            <person name="Pitluck S."/>
            <person name="Schmutz J."/>
            <person name="Larimer F."/>
            <person name="Land M."/>
            <person name="Hauser L."/>
            <person name="Mikhailova N."/>
            <person name="Li T."/>
            <person name="Overmann J."/>
            <person name="Schuster S.C."/>
            <person name="Bryant D.A."/>
            <person name="Richardson P."/>
        </authorList>
    </citation>
    <scope>NUCLEOTIDE SEQUENCE [LARGE SCALE GENOMIC DNA]</scope>
    <source>
        <strain>DSM 265 / 1930</strain>
    </source>
</reference>
<proteinExistence type="inferred from homology"/>
<keyword id="KW-0175">Coiled coil</keyword>
<keyword id="KW-0238">DNA-binding</keyword>
<keyword id="KW-0804">Transcription</keyword>
<keyword id="KW-0805">Transcription regulation</keyword>
<organism>
    <name type="scientific">Chlorobium phaeovibrioides (strain DSM 265 / 1930)</name>
    <name type="common">Prosthecochloris vibrioformis (strain DSM 265)</name>
    <dbReference type="NCBI Taxonomy" id="290318"/>
    <lineage>
        <taxon>Bacteria</taxon>
        <taxon>Pseudomonadati</taxon>
        <taxon>Chlorobiota</taxon>
        <taxon>Chlorobiia</taxon>
        <taxon>Chlorobiales</taxon>
        <taxon>Chlorobiaceae</taxon>
        <taxon>Chlorobium/Pelodictyon group</taxon>
        <taxon>Chlorobium</taxon>
    </lineage>
</organism>
<evidence type="ECO:0000255" key="1">
    <source>
        <dbReference type="HAMAP-Rule" id="MF_00105"/>
    </source>
</evidence>
<comment type="function">
    <text evidence="1">Necessary for efficient RNA polymerase transcription elongation past template-encoded arresting sites. The arresting sites in DNA have the property of trapping a certain fraction of elongating RNA polymerases that pass through, resulting in locked ternary complexes. Cleavage of the nascent transcript by cleavage factors such as GreA or GreB allows the resumption of elongation from the new 3'terminus. GreA releases sequences of 2 to 3 nucleotides.</text>
</comment>
<comment type="similarity">
    <text evidence="1">Belongs to the GreA/GreB family.</text>
</comment>
<feature type="chain" id="PRO_1000075881" description="Transcription elongation factor GreA">
    <location>
        <begin position="1"/>
        <end position="159"/>
    </location>
</feature>
<feature type="coiled-coil region" evidence="1">
    <location>
        <begin position="44"/>
        <end position="75"/>
    </location>
</feature>